<protein>
    <recommendedName>
        <fullName evidence="1">Large ribosomal subunit protein uL4</fullName>
    </recommendedName>
    <alternativeName>
        <fullName evidence="3">50S ribosomal protein L4</fullName>
    </alternativeName>
</protein>
<organism>
    <name type="scientific">Ehrlichia ruminantium (strain Welgevonden)</name>
    <dbReference type="NCBI Taxonomy" id="254945"/>
    <lineage>
        <taxon>Bacteria</taxon>
        <taxon>Pseudomonadati</taxon>
        <taxon>Pseudomonadota</taxon>
        <taxon>Alphaproteobacteria</taxon>
        <taxon>Rickettsiales</taxon>
        <taxon>Anaplasmataceae</taxon>
        <taxon>Ehrlichia</taxon>
    </lineage>
</organism>
<proteinExistence type="inferred from homology"/>
<name>RL4_EHRRW</name>
<evidence type="ECO:0000255" key="1">
    <source>
        <dbReference type="HAMAP-Rule" id="MF_01328"/>
    </source>
</evidence>
<evidence type="ECO:0000256" key="2">
    <source>
        <dbReference type="SAM" id="MobiDB-lite"/>
    </source>
</evidence>
<evidence type="ECO:0000305" key="3"/>
<keyword id="KW-0687">Ribonucleoprotein</keyword>
<keyword id="KW-0689">Ribosomal protein</keyword>
<keyword id="KW-0694">RNA-binding</keyword>
<keyword id="KW-0699">rRNA-binding</keyword>
<reference key="1">
    <citation type="journal article" date="2005" name="Proc. Natl. Acad. Sci. U.S.A.">
        <title>The genome of the heartwater agent Ehrlichia ruminantium contains multiple tandem repeats of actively variable copy number.</title>
        <authorList>
            <person name="Collins N.E."/>
            <person name="Liebenberg J."/>
            <person name="de Villiers E.P."/>
            <person name="Brayton K.A."/>
            <person name="Louw E."/>
            <person name="Pretorius A."/>
            <person name="Faber F.E."/>
            <person name="van Heerden H."/>
            <person name="Josemans A."/>
            <person name="van Kleef M."/>
            <person name="Steyn H.C."/>
            <person name="van Strijp M.F."/>
            <person name="Zweygarth E."/>
            <person name="Jongejan F."/>
            <person name="Maillard J.C."/>
            <person name="Berthier D."/>
            <person name="Botha M."/>
            <person name="Joubert F."/>
            <person name="Corton C.H."/>
            <person name="Thomson N.R."/>
            <person name="Allsopp M.T."/>
            <person name="Allsopp B.A."/>
        </authorList>
    </citation>
    <scope>NUCLEOTIDE SEQUENCE [LARGE SCALE GENOMIC DNA]</scope>
    <source>
        <strain>Welgevonden</strain>
    </source>
</reference>
<reference key="2">
    <citation type="journal article" date="2006" name="J. Bacteriol.">
        <title>Comparative genomic analysis of three strains of Ehrlichia ruminantium reveals an active process of genome size plasticity.</title>
        <authorList>
            <person name="Frutos R."/>
            <person name="Viari A."/>
            <person name="Ferraz C."/>
            <person name="Morgat A."/>
            <person name="Eychenie S."/>
            <person name="Kandassamy Y."/>
            <person name="Chantal I."/>
            <person name="Bensaid A."/>
            <person name="Coissac E."/>
            <person name="Vachiery N."/>
            <person name="Demaille J."/>
            <person name="Martinez D."/>
        </authorList>
    </citation>
    <scope>NUCLEOTIDE SEQUENCE [LARGE SCALE GENOMIC DNA]</scope>
    <source>
        <strain>Welgevonden</strain>
    </source>
</reference>
<feature type="chain" id="PRO_0000242373" description="Large ribosomal subunit protein uL4">
    <location>
        <begin position="1"/>
        <end position="205"/>
    </location>
</feature>
<feature type="region of interest" description="Disordered" evidence="2">
    <location>
        <begin position="56"/>
        <end position="76"/>
    </location>
</feature>
<gene>
    <name evidence="1" type="primary">rplD</name>
    <name type="ordered locus">Erum6060</name>
    <name type="ordered locus">ERWE_CDS_06370</name>
</gene>
<accession>Q5HAS3</accession>
<accession>Q5FD59</accession>
<comment type="function">
    <text evidence="1">One of the primary rRNA binding proteins, this protein initially binds near the 5'-end of the 23S rRNA. It is important during the early stages of 50S assembly. It makes multiple contacts with different domains of the 23S rRNA in the assembled 50S subunit and ribosome.</text>
</comment>
<comment type="function">
    <text evidence="1">Forms part of the polypeptide exit tunnel.</text>
</comment>
<comment type="subunit">
    <text evidence="1">Part of the 50S ribosomal subunit.</text>
</comment>
<comment type="similarity">
    <text evidence="1">Belongs to the universal ribosomal protein uL4 family.</text>
</comment>
<dbReference type="EMBL" id="CR767821">
    <property type="protein sequence ID" value="CAH58338.1"/>
    <property type="molecule type" value="Genomic_DNA"/>
</dbReference>
<dbReference type="EMBL" id="CR925678">
    <property type="protein sequence ID" value="CAI27131.1"/>
    <property type="molecule type" value="Genomic_DNA"/>
</dbReference>
<dbReference type="RefSeq" id="WP_011155288.1">
    <property type="nucleotide sequence ID" value="NC_005295.2"/>
</dbReference>
<dbReference type="SMR" id="Q5HAS3"/>
<dbReference type="GeneID" id="33058162"/>
<dbReference type="KEGG" id="eru:Erum6060"/>
<dbReference type="KEGG" id="erw:ERWE_CDS_06370"/>
<dbReference type="eggNOG" id="COG0088">
    <property type="taxonomic scope" value="Bacteria"/>
</dbReference>
<dbReference type="HOGENOM" id="CLU_041575_5_1_5"/>
<dbReference type="Proteomes" id="UP000001021">
    <property type="component" value="Chromosome"/>
</dbReference>
<dbReference type="GO" id="GO:1990904">
    <property type="term" value="C:ribonucleoprotein complex"/>
    <property type="evidence" value="ECO:0007669"/>
    <property type="project" value="UniProtKB-KW"/>
</dbReference>
<dbReference type="GO" id="GO:0005840">
    <property type="term" value="C:ribosome"/>
    <property type="evidence" value="ECO:0007669"/>
    <property type="project" value="UniProtKB-KW"/>
</dbReference>
<dbReference type="GO" id="GO:0019843">
    <property type="term" value="F:rRNA binding"/>
    <property type="evidence" value="ECO:0007669"/>
    <property type="project" value="UniProtKB-UniRule"/>
</dbReference>
<dbReference type="GO" id="GO:0003735">
    <property type="term" value="F:structural constituent of ribosome"/>
    <property type="evidence" value="ECO:0007669"/>
    <property type="project" value="InterPro"/>
</dbReference>
<dbReference type="GO" id="GO:0006412">
    <property type="term" value="P:translation"/>
    <property type="evidence" value="ECO:0007669"/>
    <property type="project" value="UniProtKB-UniRule"/>
</dbReference>
<dbReference type="Gene3D" id="3.40.1370.10">
    <property type="match status" value="1"/>
</dbReference>
<dbReference type="HAMAP" id="MF_01328_B">
    <property type="entry name" value="Ribosomal_uL4_B"/>
    <property type="match status" value="1"/>
</dbReference>
<dbReference type="InterPro" id="IPR002136">
    <property type="entry name" value="Ribosomal_uL4"/>
</dbReference>
<dbReference type="InterPro" id="IPR013005">
    <property type="entry name" value="Ribosomal_uL4-like"/>
</dbReference>
<dbReference type="InterPro" id="IPR023574">
    <property type="entry name" value="Ribosomal_uL4_dom_sf"/>
</dbReference>
<dbReference type="NCBIfam" id="TIGR03953">
    <property type="entry name" value="rplD_bact"/>
    <property type="match status" value="1"/>
</dbReference>
<dbReference type="PANTHER" id="PTHR10746">
    <property type="entry name" value="50S RIBOSOMAL PROTEIN L4"/>
    <property type="match status" value="1"/>
</dbReference>
<dbReference type="PANTHER" id="PTHR10746:SF6">
    <property type="entry name" value="LARGE RIBOSOMAL SUBUNIT PROTEIN UL4M"/>
    <property type="match status" value="1"/>
</dbReference>
<dbReference type="Pfam" id="PF00573">
    <property type="entry name" value="Ribosomal_L4"/>
    <property type="match status" value="1"/>
</dbReference>
<dbReference type="SUPFAM" id="SSF52166">
    <property type="entry name" value="Ribosomal protein L4"/>
    <property type="match status" value="1"/>
</dbReference>
<sequence length="205" mass="23308">MEVNVINIESQNIGKIDLNPLIFSVNYRPDILKMVVEWQLSKRRIGAHKTKTIGDVSGTTAKPYRQKHTGRARQGSLRSPQFRGGAVIFGPVVRTHAYSLNKKVRNLGLKVALSLKNSCNKLLILDSIDVNFVKTAQVLRFIKNFEHQSFLIIGKDYNKGMMYSCKNLHNVTLLKQIGTNVFDILRHDCVILTVDTVKYLEDRLL</sequence>